<keyword id="KW-0456">Lyase</keyword>
<organism>
    <name type="scientific">Helicobacter pylori (strain J99 / ATCC 700824)</name>
    <name type="common">Campylobacter pylori J99</name>
    <dbReference type="NCBI Taxonomy" id="85963"/>
    <lineage>
        <taxon>Bacteria</taxon>
        <taxon>Pseudomonadati</taxon>
        <taxon>Campylobacterota</taxon>
        <taxon>Epsilonproteobacteria</taxon>
        <taxon>Campylobacterales</taxon>
        <taxon>Helicobacteraceae</taxon>
        <taxon>Helicobacter</taxon>
    </lineage>
</organism>
<proteinExistence type="inferred from homology"/>
<dbReference type="EC" id="4.3.1.1" evidence="1"/>
<dbReference type="EMBL" id="AE001439">
    <property type="protein sequence ID" value="AAD06167.1"/>
    <property type="molecule type" value="Genomic_DNA"/>
</dbReference>
<dbReference type="PIR" id="H71913">
    <property type="entry name" value="H71913"/>
</dbReference>
<dbReference type="RefSeq" id="WP_001217506.1">
    <property type="nucleotide sequence ID" value="NC_000921.1"/>
</dbReference>
<dbReference type="SMR" id="Q9ZLI5"/>
<dbReference type="KEGG" id="hpj:jhp_0594"/>
<dbReference type="eggNOG" id="COG1027">
    <property type="taxonomic scope" value="Bacteria"/>
</dbReference>
<dbReference type="Proteomes" id="UP000000804">
    <property type="component" value="Chromosome"/>
</dbReference>
<dbReference type="GO" id="GO:0005829">
    <property type="term" value="C:cytosol"/>
    <property type="evidence" value="ECO:0007669"/>
    <property type="project" value="TreeGrafter"/>
</dbReference>
<dbReference type="GO" id="GO:0008797">
    <property type="term" value="F:aspartate ammonia-lyase activity"/>
    <property type="evidence" value="ECO:0007669"/>
    <property type="project" value="UniProtKB-EC"/>
</dbReference>
<dbReference type="GO" id="GO:0006531">
    <property type="term" value="P:aspartate metabolic process"/>
    <property type="evidence" value="ECO:0007669"/>
    <property type="project" value="InterPro"/>
</dbReference>
<dbReference type="GO" id="GO:0006099">
    <property type="term" value="P:tricarboxylic acid cycle"/>
    <property type="evidence" value="ECO:0007669"/>
    <property type="project" value="InterPro"/>
</dbReference>
<dbReference type="CDD" id="cd01357">
    <property type="entry name" value="Aspartase"/>
    <property type="match status" value="1"/>
</dbReference>
<dbReference type="FunFam" id="1.10.40.30:FF:000002">
    <property type="entry name" value="Fumarate hydratase class II"/>
    <property type="match status" value="1"/>
</dbReference>
<dbReference type="FunFam" id="1.10.275.10:FF:000001">
    <property type="entry name" value="Fumarate hydratase, mitochondrial"/>
    <property type="match status" value="1"/>
</dbReference>
<dbReference type="FunFam" id="1.20.200.10:FF:000001">
    <property type="entry name" value="Fumarate hydratase, mitochondrial"/>
    <property type="match status" value="1"/>
</dbReference>
<dbReference type="Gene3D" id="1.10.40.30">
    <property type="entry name" value="Fumarase/aspartase (C-terminal domain)"/>
    <property type="match status" value="1"/>
</dbReference>
<dbReference type="Gene3D" id="1.20.200.10">
    <property type="entry name" value="Fumarase/aspartase (Central domain)"/>
    <property type="match status" value="1"/>
</dbReference>
<dbReference type="Gene3D" id="1.10.275.10">
    <property type="entry name" value="Fumarase/aspartase (N-terminal domain)"/>
    <property type="match status" value="1"/>
</dbReference>
<dbReference type="InterPro" id="IPR004708">
    <property type="entry name" value="ApsA"/>
</dbReference>
<dbReference type="InterPro" id="IPR051546">
    <property type="entry name" value="Aspartate_Ammonia-Lyase"/>
</dbReference>
<dbReference type="InterPro" id="IPR024083">
    <property type="entry name" value="Fumarase/histidase_N"/>
</dbReference>
<dbReference type="InterPro" id="IPR018951">
    <property type="entry name" value="Fumarase_C_C"/>
</dbReference>
<dbReference type="InterPro" id="IPR020557">
    <property type="entry name" value="Fumarate_lyase_CS"/>
</dbReference>
<dbReference type="InterPro" id="IPR000362">
    <property type="entry name" value="Fumarate_lyase_fam"/>
</dbReference>
<dbReference type="InterPro" id="IPR022761">
    <property type="entry name" value="Fumarate_lyase_N"/>
</dbReference>
<dbReference type="InterPro" id="IPR008948">
    <property type="entry name" value="L-Aspartase-like"/>
</dbReference>
<dbReference type="NCBIfam" id="TIGR00839">
    <property type="entry name" value="aspA"/>
    <property type="match status" value="1"/>
</dbReference>
<dbReference type="NCBIfam" id="NF008909">
    <property type="entry name" value="PRK12273.1"/>
    <property type="match status" value="1"/>
</dbReference>
<dbReference type="PANTHER" id="PTHR42696">
    <property type="entry name" value="ASPARTATE AMMONIA-LYASE"/>
    <property type="match status" value="1"/>
</dbReference>
<dbReference type="PANTHER" id="PTHR42696:SF2">
    <property type="entry name" value="ASPARTATE AMMONIA-LYASE"/>
    <property type="match status" value="1"/>
</dbReference>
<dbReference type="Pfam" id="PF10415">
    <property type="entry name" value="FumaraseC_C"/>
    <property type="match status" value="1"/>
</dbReference>
<dbReference type="Pfam" id="PF00206">
    <property type="entry name" value="Lyase_1"/>
    <property type="match status" value="1"/>
</dbReference>
<dbReference type="PRINTS" id="PR00145">
    <property type="entry name" value="ARGSUCLYASE"/>
</dbReference>
<dbReference type="PRINTS" id="PR00149">
    <property type="entry name" value="FUMRATELYASE"/>
</dbReference>
<dbReference type="SUPFAM" id="SSF48557">
    <property type="entry name" value="L-aspartase-like"/>
    <property type="match status" value="1"/>
</dbReference>
<dbReference type="PROSITE" id="PS00163">
    <property type="entry name" value="FUMARATE_LYASES"/>
    <property type="match status" value="1"/>
</dbReference>
<sequence>MRIEHDFIGQMEISDEVYYGIQTLRASENFFITNDKLCSYPVFIKSFAQVKKAAALANAQLGLIDEKLKIAICHACDLLVDGKYHDQFIVDMIQGGAGTSTNMNMNEVIANLALEYMGHQKGEYQFCHPNDHVNRSQSTNDAYPSALKIAIYERLSNLVAPMKALRDAFAQKAKEFAHVIKMGRTQLQDAVPMTLGQEFETYALMVDRDIEQVLDARNWVRELNLGGTVIGTGINSHPDYRSLIEKKIQEVTGRPFVMANNLIEATQSTGAYVQVSGVLKRIAVKLSKVCNDLRLLSSGPRAGLNEINLPKMQPGSSIMPGKVNPVIPEVVNQVCFAVIGNDLSVALAAEGGQLQLNVFEPVIAYKLFHSFVILGRAIETLTTKCVEGITANEKICHDYVFNSIGIVTALNPHIGYEKSAMIAKEALKSDRSIYDIALEKKILTKEQLDDIFKPENMLSPHAFKKHKD</sequence>
<accession>Q9ZLI5</accession>
<name>ASPA_HELPJ</name>
<reference key="1">
    <citation type="journal article" date="1999" name="Nature">
        <title>Genomic sequence comparison of two unrelated isolates of the human gastric pathogen Helicobacter pylori.</title>
        <authorList>
            <person name="Alm R.A."/>
            <person name="Ling L.-S.L."/>
            <person name="Moir D.T."/>
            <person name="King B.L."/>
            <person name="Brown E.D."/>
            <person name="Doig P.C."/>
            <person name="Smith D.R."/>
            <person name="Noonan B."/>
            <person name="Guild B.C."/>
            <person name="deJonge B.L."/>
            <person name="Carmel G."/>
            <person name="Tummino P.J."/>
            <person name="Caruso A."/>
            <person name="Uria-Nickelsen M."/>
            <person name="Mills D.M."/>
            <person name="Ives C."/>
            <person name="Gibson R."/>
            <person name="Merberg D."/>
            <person name="Mills S.D."/>
            <person name="Jiang Q."/>
            <person name="Taylor D.E."/>
            <person name="Vovis G.F."/>
            <person name="Trust T.J."/>
        </authorList>
    </citation>
    <scope>NUCLEOTIDE SEQUENCE [LARGE SCALE GENOMIC DNA]</scope>
    <source>
        <strain>J99 / ATCC 700824</strain>
    </source>
</reference>
<protein>
    <recommendedName>
        <fullName evidence="1">Aspartate ammonia-lyase</fullName>
        <shortName evidence="1">Aspartase</shortName>
        <ecNumber evidence="1">4.3.1.1</ecNumber>
    </recommendedName>
</protein>
<evidence type="ECO:0000250" key="1">
    <source>
        <dbReference type="UniProtKB" id="P0AC38"/>
    </source>
</evidence>
<evidence type="ECO:0000250" key="2">
    <source>
        <dbReference type="UniProtKB" id="Q9LCC6"/>
    </source>
</evidence>
<evidence type="ECO:0000305" key="3"/>
<gene>
    <name type="primary">aspA</name>
    <name type="ordered locus">jhp_0594</name>
</gene>
<feature type="chain" id="PRO_0000161343" description="Aspartate ammonia-lyase">
    <location>
        <begin position="1"/>
        <end position="468"/>
    </location>
</feature>
<feature type="region of interest" description="SS loop" evidence="2">
    <location>
        <begin position="315"/>
        <end position="324"/>
    </location>
</feature>
<feature type="active site" description="Proton acceptor" evidence="2">
    <location>
        <position position="316"/>
    </location>
</feature>
<feature type="binding site" evidence="2">
    <location>
        <position position="99"/>
    </location>
    <ligand>
        <name>L-aspartate</name>
        <dbReference type="ChEBI" id="CHEBI:29991"/>
    </ligand>
</feature>
<feature type="binding site" evidence="2">
    <location>
        <position position="138"/>
    </location>
    <ligand>
        <name>L-aspartate</name>
        <dbReference type="ChEBI" id="CHEBI:29991"/>
    </ligand>
</feature>
<feature type="binding site" evidence="2">
    <location>
        <position position="139"/>
    </location>
    <ligand>
        <name>L-aspartate</name>
        <dbReference type="ChEBI" id="CHEBI:29991"/>
    </ligand>
</feature>
<feature type="binding site" evidence="2">
    <location>
        <position position="140"/>
    </location>
    <ligand>
        <name>L-aspartate</name>
        <dbReference type="ChEBI" id="CHEBI:29991"/>
    </ligand>
</feature>
<feature type="binding site" evidence="2">
    <location>
        <position position="185"/>
    </location>
    <ligand>
        <name>L-aspartate</name>
        <dbReference type="ChEBI" id="CHEBI:29991"/>
    </ligand>
</feature>
<feature type="binding site" evidence="2">
    <location>
        <position position="317"/>
    </location>
    <ligand>
        <name>L-aspartate</name>
        <dbReference type="ChEBI" id="CHEBI:29991"/>
    </ligand>
</feature>
<feature type="binding site" evidence="2">
    <location>
        <position position="322"/>
    </location>
    <ligand>
        <name>L-aspartate</name>
        <dbReference type="ChEBI" id="CHEBI:29991"/>
    </ligand>
</feature>
<comment type="function">
    <text evidence="1">Catalyzes the reversible conversion of L-aspartate to fumarate and ammonia.</text>
</comment>
<comment type="catalytic activity">
    <reaction evidence="1">
        <text>L-aspartate = fumarate + NH4(+)</text>
        <dbReference type="Rhea" id="RHEA:16601"/>
        <dbReference type="ChEBI" id="CHEBI:28938"/>
        <dbReference type="ChEBI" id="CHEBI:29806"/>
        <dbReference type="ChEBI" id="CHEBI:29991"/>
        <dbReference type="EC" id="4.3.1.1"/>
    </reaction>
</comment>
<comment type="subunit">
    <text evidence="1">Homotetramer.</text>
</comment>
<comment type="similarity">
    <text evidence="3">Belongs to the class-II fumarase/aspartase family. Aspartase subfamily.</text>
</comment>